<reference key="1">
    <citation type="journal article" date="2002" name="Proc. Natl. Acad. Sci. U.S.A.">
        <title>Genome sequence and comparative microarray analysis of serotype M18 group A Streptococcus strains associated with acute rheumatic fever outbreaks.</title>
        <authorList>
            <person name="Smoot J.C."/>
            <person name="Barbian K.D."/>
            <person name="Van Gompel J.J."/>
            <person name="Smoot L.M."/>
            <person name="Chaussee M.S."/>
            <person name="Sylva G.L."/>
            <person name="Sturdevant D.E."/>
            <person name="Ricklefs S.M."/>
            <person name="Porcella S.F."/>
            <person name="Parkins L.D."/>
            <person name="Beres S.B."/>
            <person name="Campbell D.S."/>
            <person name="Smith T.M."/>
            <person name="Zhang Q."/>
            <person name="Kapur V."/>
            <person name="Daly J.A."/>
            <person name="Veasy L.G."/>
            <person name="Musser J.M."/>
        </authorList>
    </citation>
    <scope>NUCLEOTIDE SEQUENCE [LARGE SCALE GENOMIC DNA]</scope>
    <source>
        <strain>MGAS8232</strain>
    </source>
</reference>
<dbReference type="EC" id="1.1.1.94" evidence="1"/>
<dbReference type="EMBL" id="AE009949">
    <property type="protein sequence ID" value="AAL97001.1"/>
    <property type="molecule type" value="Genomic_DNA"/>
</dbReference>
<dbReference type="RefSeq" id="WP_002986123.1">
    <property type="nucleotide sequence ID" value="NC_003485.1"/>
</dbReference>
<dbReference type="SMR" id="P68889"/>
<dbReference type="KEGG" id="spm:spyM18_0212"/>
<dbReference type="HOGENOM" id="CLU_033449_0_2_9"/>
<dbReference type="UniPathway" id="UPA00940"/>
<dbReference type="GO" id="GO:0005829">
    <property type="term" value="C:cytosol"/>
    <property type="evidence" value="ECO:0007669"/>
    <property type="project" value="TreeGrafter"/>
</dbReference>
<dbReference type="GO" id="GO:0047952">
    <property type="term" value="F:glycerol-3-phosphate dehydrogenase [NAD(P)+] activity"/>
    <property type="evidence" value="ECO:0007669"/>
    <property type="project" value="UniProtKB-UniRule"/>
</dbReference>
<dbReference type="GO" id="GO:0051287">
    <property type="term" value="F:NAD binding"/>
    <property type="evidence" value="ECO:0007669"/>
    <property type="project" value="InterPro"/>
</dbReference>
<dbReference type="GO" id="GO:0005975">
    <property type="term" value="P:carbohydrate metabolic process"/>
    <property type="evidence" value="ECO:0007669"/>
    <property type="project" value="InterPro"/>
</dbReference>
<dbReference type="GO" id="GO:0046167">
    <property type="term" value="P:glycerol-3-phosphate biosynthetic process"/>
    <property type="evidence" value="ECO:0007669"/>
    <property type="project" value="UniProtKB-UniRule"/>
</dbReference>
<dbReference type="GO" id="GO:0046168">
    <property type="term" value="P:glycerol-3-phosphate catabolic process"/>
    <property type="evidence" value="ECO:0007669"/>
    <property type="project" value="InterPro"/>
</dbReference>
<dbReference type="GO" id="GO:0006650">
    <property type="term" value="P:glycerophospholipid metabolic process"/>
    <property type="evidence" value="ECO:0007669"/>
    <property type="project" value="UniProtKB-UniRule"/>
</dbReference>
<dbReference type="GO" id="GO:0008654">
    <property type="term" value="P:phospholipid biosynthetic process"/>
    <property type="evidence" value="ECO:0007669"/>
    <property type="project" value="UniProtKB-KW"/>
</dbReference>
<dbReference type="FunFam" id="1.10.1040.10:FF:000001">
    <property type="entry name" value="Glycerol-3-phosphate dehydrogenase [NAD(P)+]"/>
    <property type="match status" value="1"/>
</dbReference>
<dbReference type="FunFam" id="3.40.50.720:FF:000019">
    <property type="entry name" value="Glycerol-3-phosphate dehydrogenase [NAD(P)+]"/>
    <property type="match status" value="1"/>
</dbReference>
<dbReference type="Gene3D" id="1.10.1040.10">
    <property type="entry name" value="N-(1-d-carboxylethyl)-l-norvaline Dehydrogenase, domain 2"/>
    <property type="match status" value="1"/>
</dbReference>
<dbReference type="Gene3D" id="3.40.50.720">
    <property type="entry name" value="NAD(P)-binding Rossmann-like Domain"/>
    <property type="match status" value="1"/>
</dbReference>
<dbReference type="HAMAP" id="MF_00394">
    <property type="entry name" value="NAD_Glyc3P_dehydrog"/>
    <property type="match status" value="1"/>
</dbReference>
<dbReference type="InterPro" id="IPR008927">
    <property type="entry name" value="6-PGluconate_DH-like_C_sf"/>
</dbReference>
<dbReference type="InterPro" id="IPR013328">
    <property type="entry name" value="6PGD_dom2"/>
</dbReference>
<dbReference type="InterPro" id="IPR006168">
    <property type="entry name" value="G3P_DH_NAD-dep"/>
</dbReference>
<dbReference type="InterPro" id="IPR006109">
    <property type="entry name" value="G3P_DH_NAD-dep_C"/>
</dbReference>
<dbReference type="InterPro" id="IPR011128">
    <property type="entry name" value="G3P_DH_NAD-dep_N"/>
</dbReference>
<dbReference type="InterPro" id="IPR036291">
    <property type="entry name" value="NAD(P)-bd_dom_sf"/>
</dbReference>
<dbReference type="NCBIfam" id="NF000940">
    <property type="entry name" value="PRK00094.1-2"/>
    <property type="match status" value="1"/>
</dbReference>
<dbReference type="NCBIfam" id="NF000941">
    <property type="entry name" value="PRK00094.1-3"/>
    <property type="match status" value="1"/>
</dbReference>
<dbReference type="NCBIfam" id="NF000942">
    <property type="entry name" value="PRK00094.1-4"/>
    <property type="match status" value="1"/>
</dbReference>
<dbReference type="PANTHER" id="PTHR11728">
    <property type="entry name" value="GLYCEROL-3-PHOSPHATE DEHYDROGENASE"/>
    <property type="match status" value="1"/>
</dbReference>
<dbReference type="PANTHER" id="PTHR11728:SF1">
    <property type="entry name" value="GLYCEROL-3-PHOSPHATE DEHYDROGENASE [NAD(+)] 2, CHLOROPLASTIC"/>
    <property type="match status" value="1"/>
</dbReference>
<dbReference type="Pfam" id="PF07479">
    <property type="entry name" value="NAD_Gly3P_dh_C"/>
    <property type="match status" value="1"/>
</dbReference>
<dbReference type="Pfam" id="PF01210">
    <property type="entry name" value="NAD_Gly3P_dh_N"/>
    <property type="match status" value="1"/>
</dbReference>
<dbReference type="PIRSF" id="PIRSF000114">
    <property type="entry name" value="Glycerol-3-P_dh"/>
    <property type="match status" value="1"/>
</dbReference>
<dbReference type="PRINTS" id="PR00077">
    <property type="entry name" value="GPDHDRGNASE"/>
</dbReference>
<dbReference type="SUPFAM" id="SSF48179">
    <property type="entry name" value="6-phosphogluconate dehydrogenase C-terminal domain-like"/>
    <property type="match status" value="1"/>
</dbReference>
<dbReference type="SUPFAM" id="SSF51735">
    <property type="entry name" value="NAD(P)-binding Rossmann-fold domains"/>
    <property type="match status" value="1"/>
</dbReference>
<dbReference type="PROSITE" id="PS00957">
    <property type="entry name" value="NAD_G3PDH"/>
    <property type="match status" value="1"/>
</dbReference>
<keyword id="KW-0963">Cytoplasm</keyword>
<keyword id="KW-0444">Lipid biosynthesis</keyword>
<keyword id="KW-0443">Lipid metabolism</keyword>
<keyword id="KW-0520">NAD</keyword>
<keyword id="KW-0521">NADP</keyword>
<keyword id="KW-0547">Nucleotide-binding</keyword>
<keyword id="KW-0560">Oxidoreductase</keyword>
<keyword id="KW-0594">Phospholipid biosynthesis</keyword>
<keyword id="KW-1208">Phospholipid metabolism</keyword>
<organism>
    <name type="scientific">Streptococcus pyogenes serotype M18 (strain MGAS8232)</name>
    <dbReference type="NCBI Taxonomy" id="186103"/>
    <lineage>
        <taxon>Bacteria</taxon>
        <taxon>Bacillati</taxon>
        <taxon>Bacillota</taxon>
        <taxon>Bacilli</taxon>
        <taxon>Lactobacillales</taxon>
        <taxon>Streptococcaceae</taxon>
        <taxon>Streptococcus</taxon>
    </lineage>
</organism>
<proteinExistence type="inferred from homology"/>
<sequence length="338" mass="36681">MTKQKVAILGPGSWGTALSQVLNDNGHDVRLWGNIPDQIEEINTKHTNRHYFKDIVLDKNITATLDLGQALSDVDAVLFVVPTKVTRLVARQVAAILDHKVVVMHASKGLEPETHERLSTILEEEIPAHFRSEVVVVSGPSHAEETIVRDITLITAASKDIEAAKYVQSLFSNHYFRLYTNTDVIGVETAGALKNIIAVGAGALHGLGYGDNAKAAVITRGLAEITRLGVKLGADPLTYSGLSGVGDLIVTGTSVHSRNWRAGAALGRGEKLEDIERNMGMVIEGIATTKVAYEIAQDLGVYMPITTAIYKSIYEGADIKESILGMMSNEFRSENEWH</sequence>
<protein>
    <recommendedName>
        <fullName evidence="1">Glycerol-3-phosphate dehydrogenase [NAD(P)+]</fullName>
        <ecNumber evidence="1">1.1.1.94</ecNumber>
    </recommendedName>
    <alternativeName>
        <fullName evidence="1">NAD(P)(+)-dependent glycerol-3-phosphate dehydrogenase</fullName>
    </alternativeName>
    <alternativeName>
        <fullName evidence="1">NAD(P)H-dependent dihydroxyacetone-phosphate reductase</fullName>
    </alternativeName>
</protein>
<comment type="function">
    <text evidence="1">Catalyzes the reduction of the glycolytic intermediate dihydroxyacetone phosphate (DHAP) to sn-glycerol 3-phosphate (G3P), the key precursor for phospholipid synthesis.</text>
</comment>
<comment type="catalytic activity">
    <reaction evidence="1">
        <text>sn-glycerol 3-phosphate + NAD(+) = dihydroxyacetone phosphate + NADH + H(+)</text>
        <dbReference type="Rhea" id="RHEA:11092"/>
        <dbReference type="ChEBI" id="CHEBI:15378"/>
        <dbReference type="ChEBI" id="CHEBI:57540"/>
        <dbReference type="ChEBI" id="CHEBI:57597"/>
        <dbReference type="ChEBI" id="CHEBI:57642"/>
        <dbReference type="ChEBI" id="CHEBI:57945"/>
        <dbReference type="EC" id="1.1.1.94"/>
    </reaction>
    <physiologicalReaction direction="right-to-left" evidence="1">
        <dbReference type="Rhea" id="RHEA:11094"/>
    </physiologicalReaction>
</comment>
<comment type="catalytic activity">
    <reaction evidence="1">
        <text>sn-glycerol 3-phosphate + NADP(+) = dihydroxyacetone phosphate + NADPH + H(+)</text>
        <dbReference type="Rhea" id="RHEA:11096"/>
        <dbReference type="ChEBI" id="CHEBI:15378"/>
        <dbReference type="ChEBI" id="CHEBI:57597"/>
        <dbReference type="ChEBI" id="CHEBI:57642"/>
        <dbReference type="ChEBI" id="CHEBI:57783"/>
        <dbReference type="ChEBI" id="CHEBI:58349"/>
        <dbReference type="EC" id="1.1.1.94"/>
    </reaction>
    <physiologicalReaction direction="right-to-left" evidence="1">
        <dbReference type="Rhea" id="RHEA:11098"/>
    </physiologicalReaction>
</comment>
<comment type="pathway">
    <text evidence="1">Membrane lipid metabolism; glycerophospholipid metabolism.</text>
</comment>
<comment type="subcellular location">
    <subcellularLocation>
        <location evidence="1">Cytoplasm</location>
    </subcellularLocation>
</comment>
<comment type="similarity">
    <text evidence="1">Belongs to the NAD-dependent glycerol-3-phosphate dehydrogenase family.</text>
</comment>
<gene>
    <name evidence="1" type="primary">gpsA</name>
    <name type="ordered locus">spyM18_0212</name>
</gene>
<evidence type="ECO:0000255" key="1">
    <source>
        <dbReference type="HAMAP-Rule" id="MF_00394"/>
    </source>
</evidence>
<feature type="chain" id="PRO_0000138043" description="Glycerol-3-phosphate dehydrogenase [NAD(P)+]">
    <location>
        <begin position="1"/>
        <end position="338"/>
    </location>
</feature>
<feature type="active site" description="Proton acceptor" evidence="1">
    <location>
        <position position="194"/>
    </location>
</feature>
<feature type="binding site" evidence="1">
    <location>
        <position position="13"/>
    </location>
    <ligand>
        <name>NADPH</name>
        <dbReference type="ChEBI" id="CHEBI:57783"/>
    </ligand>
</feature>
<feature type="binding site" evidence="1">
    <location>
        <position position="14"/>
    </location>
    <ligand>
        <name>NADPH</name>
        <dbReference type="ChEBI" id="CHEBI:57783"/>
    </ligand>
</feature>
<feature type="binding site" evidence="1">
    <location>
        <position position="108"/>
    </location>
    <ligand>
        <name>NADPH</name>
        <dbReference type="ChEBI" id="CHEBI:57783"/>
    </ligand>
</feature>
<feature type="binding site" evidence="1">
    <location>
        <position position="108"/>
    </location>
    <ligand>
        <name>sn-glycerol 3-phosphate</name>
        <dbReference type="ChEBI" id="CHEBI:57597"/>
    </ligand>
</feature>
<feature type="binding site" evidence="1">
    <location>
        <position position="139"/>
    </location>
    <ligand>
        <name>sn-glycerol 3-phosphate</name>
        <dbReference type="ChEBI" id="CHEBI:57597"/>
    </ligand>
</feature>
<feature type="binding site" evidence="1">
    <location>
        <position position="141"/>
    </location>
    <ligand>
        <name>sn-glycerol 3-phosphate</name>
        <dbReference type="ChEBI" id="CHEBI:57597"/>
    </ligand>
</feature>
<feature type="binding site" evidence="1">
    <location>
        <position position="143"/>
    </location>
    <ligand>
        <name>NADPH</name>
        <dbReference type="ChEBI" id="CHEBI:57783"/>
    </ligand>
</feature>
<feature type="binding site" evidence="1">
    <location>
        <position position="194"/>
    </location>
    <ligand>
        <name>sn-glycerol 3-phosphate</name>
        <dbReference type="ChEBI" id="CHEBI:57597"/>
    </ligand>
</feature>
<feature type="binding site" evidence="1">
    <location>
        <position position="247"/>
    </location>
    <ligand>
        <name>sn-glycerol 3-phosphate</name>
        <dbReference type="ChEBI" id="CHEBI:57597"/>
    </ligand>
</feature>
<feature type="binding site" evidence="1">
    <location>
        <position position="257"/>
    </location>
    <ligand>
        <name>sn-glycerol 3-phosphate</name>
        <dbReference type="ChEBI" id="CHEBI:57597"/>
    </ligand>
</feature>
<feature type="binding site" evidence="1">
    <location>
        <position position="258"/>
    </location>
    <ligand>
        <name>NADPH</name>
        <dbReference type="ChEBI" id="CHEBI:57783"/>
    </ligand>
</feature>
<feature type="binding site" evidence="1">
    <location>
        <position position="258"/>
    </location>
    <ligand>
        <name>sn-glycerol 3-phosphate</name>
        <dbReference type="ChEBI" id="CHEBI:57597"/>
    </ligand>
</feature>
<feature type="binding site" evidence="1">
    <location>
        <position position="259"/>
    </location>
    <ligand>
        <name>sn-glycerol 3-phosphate</name>
        <dbReference type="ChEBI" id="CHEBI:57597"/>
    </ligand>
</feature>
<feature type="binding site" evidence="1">
    <location>
        <position position="282"/>
    </location>
    <ligand>
        <name>NADPH</name>
        <dbReference type="ChEBI" id="CHEBI:57783"/>
    </ligand>
</feature>
<feature type="binding site" evidence="1">
    <location>
        <position position="284"/>
    </location>
    <ligand>
        <name>NADPH</name>
        <dbReference type="ChEBI" id="CHEBI:57783"/>
    </ligand>
</feature>
<accession>P68889</accession>
<accession>P58143</accession>
<accession>P82550</accession>
<name>GPDA_STRP8</name>